<reference key="1">
    <citation type="journal article" date="1992" name="Mol. Microbiol.">
        <title>Characterization of the Escherichia coli codBA operon encoding cytosine permease and cytosine deaminase.</title>
        <authorList>
            <person name="Danielsen S."/>
            <person name="Kilstrup M."/>
            <person name="Barilla K."/>
            <person name="Jochimsen B."/>
            <person name="Neuhard J."/>
        </authorList>
    </citation>
    <scope>NUCLEOTIDE SEQUENCE [GENOMIC DNA]</scope>
    <source>
        <strain>CSH01</strain>
    </source>
</reference>
<reference key="2">
    <citation type="submission" date="1997-01" db="EMBL/GenBank/DDBJ databases">
        <title>Sequence of minutes 4-25 of Escherichia coli.</title>
        <authorList>
            <person name="Chung E."/>
            <person name="Allen E."/>
            <person name="Araujo R."/>
            <person name="Aparicio A.M."/>
            <person name="Davis K."/>
            <person name="Duncan M."/>
            <person name="Federspiel N."/>
            <person name="Hyman R."/>
            <person name="Kalman S."/>
            <person name="Komp C."/>
            <person name="Kurdi O."/>
            <person name="Lew H."/>
            <person name="Lin D."/>
            <person name="Namath A."/>
            <person name="Oefner P."/>
            <person name="Roberts D."/>
            <person name="Schramm S."/>
            <person name="Davis R.W."/>
        </authorList>
    </citation>
    <scope>NUCLEOTIDE SEQUENCE [LARGE SCALE GENOMIC DNA]</scope>
    <source>
        <strain>K12 / MG1655 / ATCC 47076</strain>
    </source>
</reference>
<reference key="3">
    <citation type="journal article" date="1997" name="Science">
        <title>The complete genome sequence of Escherichia coli K-12.</title>
        <authorList>
            <person name="Blattner F.R."/>
            <person name="Plunkett G. III"/>
            <person name="Bloch C.A."/>
            <person name="Perna N.T."/>
            <person name="Burland V."/>
            <person name="Riley M."/>
            <person name="Collado-Vides J."/>
            <person name="Glasner J.D."/>
            <person name="Rode C.K."/>
            <person name="Mayhew G.F."/>
            <person name="Gregor J."/>
            <person name="Davis N.W."/>
            <person name="Kirkpatrick H.A."/>
            <person name="Goeden M.A."/>
            <person name="Rose D.J."/>
            <person name="Mau B."/>
            <person name="Shao Y."/>
        </authorList>
    </citation>
    <scope>NUCLEOTIDE SEQUENCE [LARGE SCALE GENOMIC DNA]</scope>
    <source>
        <strain>K12 / MG1655 / ATCC 47076</strain>
    </source>
</reference>
<reference key="4">
    <citation type="journal article" date="2006" name="Mol. Syst. Biol.">
        <title>Highly accurate genome sequences of Escherichia coli K-12 strains MG1655 and W3110.</title>
        <authorList>
            <person name="Hayashi K."/>
            <person name="Morooka N."/>
            <person name="Yamamoto Y."/>
            <person name="Fujita K."/>
            <person name="Isono K."/>
            <person name="Choi S."/>
            <person name="Ohtsubo E."/>
            <person name="Baba T."/>
            <person name="Wanner B.L."/>
            <person name="Mori H."/>
            <person name="Horiuchi T."/>
        </authorList>
    </citation>
    <scope>NUCLEOTIDE SEQUENCE [LARGE SCALE GENOMIC DNA]</scope>
    <source>
        <strain>K12 / W3110 / ATCC 27325 / DSM 5911</strain>
    </source>
</reference>
<reference key="5">
    <citation type="journal article" date="2005" name="Science">
        <title>Global topology analysis of the Escherichia coli inner membrane proteome.</title>
        <authorList>
            <person name="Daley D.O."/>
            <person name="Rapp M."/>
            <person name="Granseth E."/>
            <person name="Melen K."/>
            <person name="Drew D."/>
            <person name="von Heijne G."/>
        </authorList>
    </citation>
    <scope>TOPOLOGY [LARGE SCALE ANALYSIS]</scope>
    <source>
        <strain>K12 / MG1655 / ATCC 47076</strain>
    </source>
</reference>
<sequence>MSQDNNFSQGPVPQSARKGVLALTFVMLGLTFFSASMWTGGTLGTGLSYHDFFLAVLIGNLLLGIYTSFLGYIGAKTGLTTHLLARFSFGVKGSWLPSLLLGGTQVGWFGVGVAMFAIPVGKATGLDINLLIAVSGLLMTVTVFFGISALTVLSVIAVPAIACLGGYSVWLAVNGMGGLDALKAVVPAQPLDFNVALALVVGSFISAGTLTADFVRFGRNAKLAVLVAMVAFFLGNSLMFIFGAAGAAALGMADISDVMIAQGLLLPAIVVLGLNIWTTNDNALYASGLGFANITGMSSKTLSVINGIIGTVCALWLYNNFVGWLTFLSAAIPPVGGVIIADYLMNRRRYEHFATTRMMSVNWVAILAVALGIAAGHWLPGIVPVNAVLGGALSYLILNPILNRKTTAAMTHVEANSVE</sequence>
<protein>
    <recommendedName>
        <fullName>Cytosine permease</fullName>
    </recommendedName>
</protein>
<keyword id="KW-0997">Cell inner membrane</keyword>
<keyword id="KW-1003">Cell membrane</keyword>
<keyword id="KW-0205">Cytosine metabolism</keyword>
<keyword id="KW-0472">Membrane</keyword>
<keyword id="KW-1185">Reference proteome</keyword>
<keyword id="KW-0812">Transmembrane</keyword>
<keyword id="KW-1133">Transmembrane helix</keyword>
<keyword id="KW-0813">Transport</keyword>
<accession>P0AA82</accession>
<accession>P25525</accession>
<accession>Q2MC88</accession>
<proteinExistence type="evidence at protein level"/>
<dbReference type="EMBL" id="X63656">
    <property type="protein sequence ID" value="CAA45195.1"/>
    <property type="molecule type" value="Genomic_DNA"/>
</dbReference>
<dbReference type="EMBL" id="U73857">
    <property type="protein sequence ID" value="AAB18060.1"/>
    <property type="molecule type" value="Genomic_DNA"/>
</dbReference>
<dbReference type="EMBL" id="U00096">
    <property type="protein sequence ID" value="AAC73439.1"/>
    <property type="molecule type" value="Genomic_DNA"/>
</dbReference>
<dbReference type="EMBL" id="AP009048">
    <property type="protein sequence ID" value="BAE76118.1"/>
    <property type="molecule type" value="Genomic_DNA"/>
</dbReference>
<dbReference type="PIR" id="S22661">
    <property type="entry name" value="S22661"/>
</dbReference>
<dbReference type="RefSeq" id="NP_414870.1">
    <property type="nucleotide sequence ID" value="NC_000913.3"/>
</dbReference>
<dbReference type="RefSeq" id="WP_000076233.1">
    <property type="nucleotide sequence ID" value="NZ_SSZK01000097.1"/>
</dbReference>
<dbReference type="SMR" id="P0AA82"/>
<dbReference type="BioGRID" id="4259812">
    <property type="interactions" value="7"/>
</dbReference>
<dbReference type="FunCoup" id="P0AA82">
    <property type="interactions" value="82"/>
</dbReference>
<dbReference type="STRING" id="511145.b0336"/>
<dbReference type="TCDB" id="2.A.39.1.1">
    <property type="family name" value="the nucleobase:cation symporter-1 (ncs1) family"/>
</dbReference>
<dbReference type="PaxDb" id="511145-b0336"/>
<dbReference type="EnsemblBacteria" id="AAC73439">
    <property type="protein sequence ID" value="AAC73439"/>
    <property type="gene ID" value="b0336"/>
</dbReference>
<dbReference type="GeneID" id="944994"/>
<dbReference type="KEGG" id="ecj:JW0327"/>
<dbReference type="KEGG" id="eco:b0336"/>
<dbReference type="KEGG" id="ecoc:C3026_01645"/>
<dbReference type="KEGG" id="ecoc:C3026_24815"/>
<dbReference type="PATRIC" id="fig|1411691.4.peg.1941"/>
<dbReference type="EchoBASE" id="EB1303"/>
<dbReference type="eggNOG" id="COG1457">
    <property type="taxonomic scope" value="Bacteria"/>
</dbReference>
<dbReference type="HOGENOM" id="CLU_035711_1_1_6"/>
<dbReference type="InParanoid" id="P0AA82"/>
<dbReference type="OMA" id="TQIGWYA"/>
<dbReference type="OrthoDB" id="5487344at2"/>
<dbReference type="PhylomeDB" id="P0AA82"/>
<dbReference type="BioCyc" id="EcoCyc:CODB-MONOMER"/>
<dbReference type="BioCyc" id="MetaCyc:CODB-MONOMER"/>
<dbReference type="PRO" id="PR:P0AA82"/>
<dbReference type="Proteomes" id="UP000000625">
    <property type="component" value="Chromosome"/>
</dbReference>
<dbReference type="GO" id="GO:0016020">
    <property type="term" value="C:membrane"/>
    <property type="evidence" value="ECO:0000314"/>
    <property type="project" value="EcoCyc"/>
</dbReference>
<dbReference type="GO" id="GO:0005886">
    <property type="term" value="C:plasma membrane"/>
    <property type="evidence" value="ECO:0000314"/>
    <property type="project" value="EcoCyc"/>
</dbReference>
<dbReference type="GO" id="GO:0015209">
    <property type="term" value="F:cytosine transmembrane transporter activity"/>
    <property type="evidence" value="ECO:0000269"/>
    <property type="project" value="EcoCyc"/>
</dbReference>
<dbReference type="GO" id="GO:0019858">
    <property type="term" value="P:cytosine metabolic process"/>
    <property type="evidence" value="ECO:0007669"/>
    <property type="project" value="UniProtKB-KW"/>
</dbReference>
<dbReference type="GO" id="GO:0015856">
    <property type="term" value="P:cytosine transport"/>
    <property type="evidence" value="ECO:0000269"/>
    <property type="project" value="EcoCyc"/>
</dbReference>
<dbReference type="GO" id="GO:1902600">
    <property type="term" value="P:proton transmembrane transport"/>
    <property type="evidence" value="ECO:0007669"/>
    <property type="project" value="GOC"/>
</dbReference>
<dbReference type="CDD" id="cd11484">
    <property type="entry name" value="SLC-NCS1sbd_CobB-like"/>
    <property type="match status" value="1"/>
</dbReference>
<dbReference type="FunFam" id="1.10.4160.10:FF:000003">
    <property type="entry name" value="Cytosine permease"/>
    <property type="match status" value="1"/>
</dbReference>
<dbReference type="Gene3D" id="1.10.4160.10">
    <property type="entry name" value="Hydantoin permease"/>
    <property type="match status" value="1"/>
</dbReference>
<dbReference type="InterPro" id="IPR030191">
    <property type="entry name" value="CodB"/>
</dbReference>
<dbReference type="InterPro" id="IPR001248">
    <property type="entry name" value="Pur-cyt_permease"/>
</dbReference>
<dbReference type="NCBIfam" id="NF008241">
    <property type="entry name" value="PRK11017.1"/>
    <property type="match status" value="1"/>
</dbReference>
<dbReference type="PANTHER" id="PTHR30569:SF0">
    <property type="entry name" value="CYTOSINE PERMEASE"/>
    <property type="match status" value="1"/>
</dbReference>
<dbReference type="PANTHER" id="PTHR30569">
    <property type="entry name" value="CYTOSINE TRANSPORTER CODB"/>
    <property type="match status" value="1"/>
</dbReference>
<dbReference type="Pfam" id="PF02133">
    <property type="entry name" value="Transp_cyt_pur"/>
    <property type="match status" value="1"/>
</dbReference>
<evidence type="ECO:0000305" key="1"/>
<evidence type="ECO:0000305" key="2">
    <source>
    </source>
</evidence>
<comment type="function">
    <text>Required for cytosine transport into the cell.</text>
</comment>
<comment type="subcellular location">
    <subcellularLocation>
        <location>Cell inner membrane</location>
        <topology>Multi-pass membrane protein</topology>
    </subcellularLocation>
</comment>
<comment type="similarity">
    <text evidence="1">Belongs to the purine-cytosine permease (2.A.39) family.</text>
</comment>
<organism>
    <name type="scientific">Escherichia coli (strain K12)</name>
    <dbReference type="NCBI Taxonomy" id="83333"/>
    <lineage>
        <taxon>Bacteria</taxon>
        <taxon>Pseudomonadati</taxon>
        <taxon>Pseudomonadota</taxon>
        <taxon>Gammaproteobacteria</taxon>
        <taxon>Enterobacterales</taxon>
        <taxon>Enterobacteriaceae</taxon>
        <taxon>Escherichia</taxon>
    </lineage>
</organism>
<gene>
    <name type="primary">codB</name>
    <name type="ordered locus">b0336</name>
    <name type="ordered locus">JW0327</name>
</gene>
<name>CODB_ECOLI</name>
<feature type="chain" id="PRO_0000197932" description="Cytosine permease">
    <location>
        <begin position="1"/>
        <end position="419"/>
    </location>
</feature>
<feature type="topological domain" description="Cytoplasmic" evidence="2">
    <location>
        <begin position="1"/>
        <end position="19"/>
    </location>
</feature>
<feature type="transmembrane region" description="Helical; Name=1" evidence="1">
    <location>
        <begin position="20"/>
        <end position="39"/>
    </location>
</feature>
<feature type="topological domain" description="Periplasmic" evidence="2">
    <location>
        <begin position="40"/>
        <end position="51"/>
    </location>
</feature>
<feature type="transmembrane region" description="Helical; Name=2" evidence="1">
    <location>
        <begin position="52"/>
        <end position="71"/>
    </location>
</feature>
<feature type="topological domain" description="Cytoplasmic" evidence="2">
    <location>
        <begin position="72"/>
        <end position="100"/>
    </location>
</feature>
<feature type="transmembrane region" description="Helical; Name=3" evidence="1">
    <location>
        <begin position="101"/>
        <end position="120"/>
    </location>
</feature>
<feature type="topological domain" description="Periplasmic" evidence="2">
    <location>
        <begin position="121"/>
        <end position="127"/>
    </location>
</feature>
<feature type="transmembrane region" description="Helical; Name=4" evidence="1">
    <location>
        <begin position="128"/>
        <end position="147"/>
    </location>
</feature>
<feature type="topological domain" description="Cytoplasmic" evidence="2">
    <location>
        <begin position="148"/>
        <end position="152"/>
    </location>
</feature>
<feature type="transmembrane region" description="Helical; Name=5" evidence="1">
    <location>
        <begin position="153"/>
        <end position="172"/>
    </location>
</feature>
<feature type="topological domain" description="Periplasmic" evidence="2">
    <location>
        <begin position="173"/>
        <end position="192"/>
    </location>
</feature>
<feature type="transmembrane region" description="Helical; Name=6" evidence="1">
    <location>
        <begin position="193"/>
        <end position="212"/>
    </location>
</feature>
<feature type="topological domain" description="Cytoplasmic" evidence="2">
    <location>
        <begin position="213"/>
        <end position="221"/>
    </location>
</feature>
<feature type="transmembrane region" description="Helical; Name=7" evidence="1">
    <location>
        <begin position="222"/>
        <end position="242"/>
    </location>
</feature>
<feature type="topological domain" description="Periplasmic" evidence="2">
    <location>
        <begin position="243"/>
        <end position="257"/>
    </location>
</feature>
<feature type="transmembrane region" description="Helical; Name=8" evidence="1">
    <location>
        <begin position="258"/>
        <end position="277"/>
    </location>
</feature>
<feature type="topological domain" description="Cytoplasmic" evidence="2">
    <location>
        <begin position="278"/>
        <end position="300"/>
    </location>
</feature>
<feature type="transmembrane region" description="Helical; Name=9" evidence="1">
    <location>
        <begin position="301"/>
        <end position="320"/>
    </location>
</feature>
<feature type="topological domain" description="Periplasmic" evidence="2">
    <location>
        <position position="321"/>
    </location>
</feature>
<feature type="transmembrane region" description="Helical; Name=10" evidence="1">
    <location>
        <begin position="322"/>
        <end position="341"/>
    </location>
</feature>
<feature type="topological domain" description="Cytoplasmic" evidence="2">
    <location>
        <begin position="342"/>
        <end position="358"/>
    </location>
</feature>
<feature type="transmembrane region" description="Helical; Name=11" evidence="1">
    <location>
        <begin position="359"/>
        <end position="378"/>
    </location>
</feature>
<feature type="topological domain" description="Periplasmic" evidence="2">
    <location>
        <begin position="379"/>
        <end position="380"/>
    </location>
</feature>
<feature type="transmembrane region" description="Helical; Name=12" evidence="1">
    <location>
        <begin position="381"/>
        <end position="400"/>
    </location>
</feature>
<feature type="topological domain" description="Cytoplasmic" evidence="2">
    <location>
        <begin position="401"/>
        <end position="419"/>
    </location>
</feature>